<dbReference type="EMBL" id="D17447">
    <property type="protein sequence ID" value="BAA04261.1"/>
    <property type="molecule type" value="mRNA"/>
</dbReference>
<dbReference type="EMBL" id="S55305">
    <property type="protein sequence ID" value="AAA13844.1"/>
    <property type="molecule type" value="mRNA"/>
</dbReference>
<dbReference type="EMBL" id="BC127496">
    <property type="protein sequence ID" value="AAI27497.1"/>
    <property type="molecule type" value="mRNA"/>
</dbReference>
<dbReference type="PIR" id="B49023">
    <property type="entry name" value="B49023"/>
</dbReference>
<dbReference type="RefSeq" id="NP_062249.1">
    <property type="nucleotide sequence ID" value="NM_019376.3"/>
</dbReference>
<dbReference type="RefSeq" id="XP_006249246.2">
    <property type="nucleotide sequence ID" value="XM_006249184.5"/>
</dbReference>
<dbReference type="SMR" id="P61983"/>
<dbReference type="BioGRID" id="248553">
    <property type="interactions" value="9"/>
</dbReference>
<dbReference type="FunCoup" id="P61983">
    <property type="interactions" value="2122"/>
</dbReference>
<dbReference type="IntAct" id="P61983">
    <property type="interactions" value="8"/>
</dbReference>
<dbReference type="MINT" id="P61983"/>
<dbReference type="STRING" id="10116.ENSRNOP00000069671"/>
<dbReference type="GlyGen" id="P61983">
    <property type="glycosylation" value="1 site, 1 O-linked glycan (1 site)"/>
</dbReference>
<dbReference type="iPTMnet" id="P61983"/>
<dbReference type="PhosphoSitePlus" id="P61983"/>
<dbReference type="SwissPalm" id="P61983"/>
<dbReference type="jPOST" id="P61983"/>
<dbReference type="PaxDb" id="10116-ENSRNOP00000001954"/>
<dbReference type="Ensembl" id="ENSRNOT00000001954.4">
    <property type="protein sequence ID" value="ENSRNOP00000001954.2"/>
    <property type="gene ID" value="ENSRNOG00000001436.6"/>
</dbReference>
<dbReference type="GeneID" id="56010"/>
<dbReference type="KEGG" id="rno:56010"/>
<dbReference type="UCSC" id="RGD:62002">
    <property type="organism name" value="rat"/>
</dbReference>
<dbReference type="AGR" id="RGD:62002"/>
<dbReference type="CTD" id="7532"/>
<dbReference type="RGD" id="62002">
    <property type="gene designation" value="Ywhag"/>
</dbReference>
<dbReference type="eggNOG" id="KOG0841">
    <property type="taxonomic scope" value="Eukaryota"/>
</dbReference>
<dbReference type="GeneTree" id="ENSGT01090000260040"/>
<dbReference type="HOGENOM" id="CLU_058290_0_0_1"/>
<dbReference type="InParanoid" id="P61983"/>
<dbReference type="OMA" id="AYGEAHE"/>
<dbReference type="OrthoDB" id="10260625at2759"/>
<dbReference type="PhylomeDB" id="P61983"/>
<dbReference type="TreeFam" id="TF102003"/>
<dbReference type="Reactome" id="R-RNO-111447">
    <property type="pathway name" value="Activation of BAD and translocation to mitochondria"/>
</dbReference>
<dbReference type="Reactome" id="R-RNO-2565942">
    <property type="pathway name" value="Regulation of PLK1 Activity at G2/M Transition"/>
</dbReference>
<dbReference type="Reactome" id="R-RNO-380259">
    <property type="pathway name" value="Loss of Nlp from mitotic centrosomes"/>
</dbReference>
<dbReference type="Reactome" id="R-RNO-380270">
    <property type="pathway name" value="Recruitment of mitotic centrosome proteins and complexes"/>
</dbReference>
<dbReference type="Reactome" id="R-RNO-380284">
    <property type="pathway name" value="Loss of proteins required for interphase microtubule organization from the centrosome"/>
</dbReference>
<dbReference type="Reactome" id="R-RNO-380320">
    <property type="pathway name" value="Recruitment of NuMA to mitotic centrosomes"/>
</dbReference>
<dbReference type="Reactome" id="R-RNO-5620912">
    <property type="pathway name" value="Anchoring of the basal body to the plasma membrane"/>
</dbReference>
<dbReference type="Reactome" id="R-RNO-5625740">
    <property type="pathway name" value="RHO GTPases activate PKNs"/>
</dbReference>
<dbReference type="Reactome" id="R-RNO-5628897">
    <property type="pathway name" value="TP53 Regulates Metabolic Genes"/>
</dbReference>
<dbReference type="Reactome" id="R-RNO-75035">
    <property type="pathway name" value="Chk1/Chk2(Cds1) mediated inactivation of Cyclin B:Cdk1 complex"/>
</dbReference>
<dbReference type="Reactome" id="R-RNO-8854518">
    <property type="pathway name" value="AURKA Activation by TPX2"/>
</dbReference>
<dbReference type="Reactome" id="R-RNO-9614399">
    <property type="pathway name" value="Regulation of localization of FOXO transcription factors"/>
</dbReference>
<dbReference type="PRO" id="PR:P61983"/>
<dbReference type="Proteomes" id="UP000002494">
    <property type="component" value="Chromosome 12"/>
</dbReference>
<dbReference type="Bgee" id="ENSRNOG00000001436">
    <property type="expression patterns" value="Expressed in Ammon's horn and 20 other cell types or tissues"/>
</dbReference>
<dbReference type="GO" id="GO:0005737">
    <property type="term" value="C:cytoplasm"/>
    <property type="evidence" value="ECO:0000250"/>
    <property type="project" value="UniProtKB"/>
</dbReference>
<dbReference type="GO" id="GO:0005829">
    <property type="term" value="C:cytosol"/>
    <property type="evidence" value="ECO:0000266"/>
    <property type="project" value="RGD"/>
</dbReference>
<dbReference type="GO" id="GO:0005759">
    <property type="term" value="C:mitochondrial matrix"/>
    <property type="evidence" value="ECO:0000266"/>
    <property type="project" value="RGD"/>
</dbReference>
<dbReference type="GO" id="GO:0005634">
    <property type="term" value="C:nucleus"/>
    <property type="evidence" value="ECO:0000266"/>
    <property type="project" value="RGD"/>
</dbReference>
<dbReference type="GO" id="GO:0098793">
    <property type="term" value="C:presynapse"/>
    <property type="evidence" value="ECO:0000314"/>
    <property type="project" value="SynGO"/>
</dbReference>
<dbReference type="GO" id="GO:0045202">
    <property type="term" value="C:synapse"/>
    <property type="evidence" value="ECO:0000314"/>
    <property type="project" value="SynGO"/>
</dbReference>
<dbReference type="GO" id="GO:0031982">
    <property type="term" value="C:vesicle"/>
    <property type="evidence" value="ECO:0000314"/>
    <property type="project" value="RGD"/>
</dbReference>
<dbReference type="GO" id="GO:0003779">
    <property type="term" value="F:actin binding"/>
    <property type="evidence" value="ECO:0000250"/>
    <property type="project" value="UniProtKB"/>
</dbReference>
<dbReference type="GO" id="GO:0030234">
    <property type="term" value="F:enzyme regulator activity"/>
    <property type="evidence" value="ECO:0000304"/>
    <property type="project" value="RGD"/>
</dbReference>
<dbReference type="GO" id="GO:0042802">
    <property type="term" value="F:identical protein binding"/>
    <property type="evidence" value="ECO:0000266"/>
    <property type="project" value="RGD"/>
</dbReference>
<dbReference type="GO" id="GO:0005159">
    <property type="term" value="F:insulin-like growth factor receptor binding"/>
    <property type="evidence" value="ECO:0000250"/>
    <property type="project" value="UniProtKB"/>
</dbReference>
<dbReference type="GO" id="GO:0140031">
    <property type="term" value="F:phosphorylation-dependent protein binding"/>
    <property type="evidence" value="ECO:0000250"/>
    <property type="project" value="UniProtKB"/>
</dbReference>
<dbReference type="GO" id="GO:0019904">
    <property type="term" value="F:protein domain specific binding"/>
    <property type="evidence" value="ECO:0000266"/>
    <property type="project" value="RGD"/>
</dbReference>
<dbReference type="GO" id="GO:0005080">
    <property type="term" value="F:protein kinase C binding"/>
    <property type="evidence" value="ECO:0000250"/>
    <property type="project" value="UniProtKB"/>
</dbReference>
<dbReference type="GO" id="GO:0140311">
    <property type="term" value="F:protein sequestering activity"/>
    <property type="evidence" value="ECO:0000250"/>
    <property type="project" value="UniProtKB"/>
</dbReference>
<dbReference type="GO" id="GO:0030971">
    <property type="term" value="F:receptor tyrosine kinase binding"/>
    <property type="evidence" value="ECO:0000353"/>
    <property type="project" value="RGD"/>
</dbReference>
<dbReference type="GO" id="GO:0042149">
    <property type="term" value="P:cellular response to glucose starvation"/>
    <property type="evidence" value="ECO:0000266"/>
    <property type="project" value="RGD"/>
</dbReference>
<dbReference type="GO" id="GO:0032869">
    <property type="term" value="P:cellular response to insulin stimulus"/>
    <property type="evidence" value="ECO:0000314"/>
    <property type="project" value="RGD"/>
</dbReference>
<dbReference type="GO" id="GO:1904262">
    <property type="term" value="P:negative regulation of TORC1 signaling"/>
    <property type="evidence" value="ECO:0000266"/>
    <property type="project" value="RGD"/>
</dbReference>
<dbReference type="GO" id="GO:0022409">
    <property type="term" value="P:positive regulation of cell-cell adhesion"/>
    <property type="evidence" value="ECO:0000250"/>
    <property type="project" value="UniProtKB"/>
</dbReference>
<dbReference type="GO" id="GO:0050870">
    <property type="term" value="P:positive regulation of T cell activation"/>
    <property type="evidence" value="ECO:0000266"/>
    <property type="project" value="RGD"/>
</dbReference>
<dbReference type="GO" id="GO:0002842">
    <property type="term" value="P:positive regulation of T cell mediated immune response to tumor cell"/>
    <property type="evidence" value="ECO:0000266"/>
    <property type="project" value="RGD"/>
</dbReference>
<dbReference type="GO" id="GO:0008104">
    <property type="term" value="P:protein localization"/>
    <property type="evidence" value="ECO:0000318"/>
    <property type="project" value="GO_Central"/>
</dbReference>
<dbReference type="GO" id="GO:0006605">
    <property type="term" value="P:protein targeting"/>
    <property type="evidence" value="ECO:0000266"/>
    <property type="project" value="RGD"/>
</dbReference>
<dbReference type="GO" id="GO:0045664">
    <property type="term" value="P:regulation of neuron differentiation"/>
    <property type="evidence" value="ECO:0000250"/>
    <property type="project" value="UniProtKB"/>
</dbReference>
<dbReference type="GO" id="GO:0032880">
    <property type="term" value="P:regulation of protein localization"/>
    <property type="evidence" value="ECO:0000250"/>
    <property type="project" value="UniProtKB"/>
</dbReference>
<dbReference type="GO" id="GO:0048167">
    <property type="term" value="P:regulation of synaptic plasticity"/>
    <property type="evidence" value="ECO:0000250"/>
    <property type="project" value="UniProtKB"/>
</dbReference>
<dbReference type="GO" id="GO:0007165">
    <property type="term" value="P:signal transduction"/>
    <property type="evidence" value="ECO:0000318"/>
    <property type="project" value="GO_Central"/>
</dbReference>
<dbReference type="CDD" id="cd10024">
    <property type="entry name" value="14-3-3_gamma"/>
    <property type="match status" value="1"/>
</dbReference>
<dbReference type="FunFam" id="1.20.190.20:FF:000001">
    <property type="entry name" value="14-3-3 gamma 1"/>
    <property type="match status" value="1"/>
</dbReference>
<dbReference type="Gene3D" id="1.20.190.20">
    <property type="entry name" value="14-3-3 domain"/>
    <property type="match status" value="1"/>
</dbReference>
<dbReference type="InterPro" id="IPR000308">
    <property type="entry name" value="14-3-3"/>
</dbReference>
<dbReference type="InterPro" id="IPR023409">
    <property type="entry name" value="14-3-3_CS"/>
</dbReference>
<dbReference type="InterPro" id="IPR036815">
    <property type="entry name" value="14-3-3_dom_sf"/>
</dbReference>
<dbReference type="InterPro" id="IPR023410">
    <property type="entry name" value="14-3-3_domain"/>
</dbReference>
<dbReference type="PANTHER" id="PTHR18860">
    <property type="entry name" value="14-3-3 PROTEIN"/>
    <property type="match status" value="1"/>
</dbReference>
<dbReference type="Pfam" id="PF00244">
    <property type="entry name" value="14-3-3"/>
    <property type="match status" value="1"/>
</dbReference>
<dbReference type="PIRSF" id="PIRSF000868">
    <property type="entry name" value="14-3-3"/>
    <property type="match status" value="1"/>
</dbReference>
<dbReference type="PRINTS" id="PR00305">
    <property type="entry name" value="1433ZETA"/>
</dbReference>
<dbReference type="SMART" id="SM00101">
    <property type="entry name" value="14_3_3"/>
    <property type="match status" value="1"/>
</dbReference>
<dbReference type="SUPFAM" id="SSF48445">
    <property type="entry name" value="14-3-3 protein"/>
    <property type="match status" value="1"/>
</dbReference>
<dbReference type="PROSITE" id="PS00796">
    <property type="entry name" value="1433_1"/>
    <property type="match status" value="1"/>
</dbReference>
<dbReference type="PROSITE" id="PS00797">
    <property type="entry name" value="1433_2"/>
    <property type="match status" value="1"/>
</dbReference>
<name>1433G_RAT</name>
<organism>
    <name type="scientific">Rattus norvegicus</name>
    <name type="common">Rat</name>
    <dbReference type="NCBI Taxonomy" id="10116"/>
    <lineage>
        <taxon>Eukaryota</taxon>
        <taxon>Metazoa</taxon>
        <taxon>Chordata</taxon>
        <taxon>Craniata</taxon>
        <taxon>Vertebrata</taxon>
        <taxon>Euteleostomi</taxon>
        <taxon>Mammalia</taxon>
        <taxon>Eutheria</taxon>
        <taxon>Euarchontoglires</taxon>
        <taxon>Glires</taxon>
        <taxon>Rodentia</taxon>
        <taxon>Myomorpha</taxon>
        <taxon>Muroidea</taxon>
        <taxon>Muridae</taxon>
        <taxon>Murinae</taxon>
        <taxon>Rattus</taxon>
    </lineage>
</organism>
<gene>
    <name evidence="7" type="primary">Ywhag</name>
</gene>
<accession>P61983</accession>
<accession>A0JPM0</accession>
<accession>O70457</accession>
<accession>P35214</accession>
<accession>Q9UDP2</accession>
<accession>Q9UN99</accession>
<evidence type="ECO:0000250" key="1">
    <source>
        <dbReference type="UniProtKB" id="P61981"/>
    </source>
</evidence>
<evidence type="ECO:0000250" key="2">
    <source>
        <dbReference type="UniProtKB" id="P61982"/>
    </source>
</evidence>
<evidence type="ECO:0000269" key="3">
    <source>
    </source>
</evidence>
<evidence type="ECO:0000269" key="4">
    <source>
    </source>
</evidence>
<evidence type="ECO:0000305" key="5"/>
<evidence type="ECO:0000305" key="6">
    <source>
    </source>
</evidence>
<evidence type="ECO:0000312" key="7">
    <source>
        <dbReference type="RGD" id="62002"/>
    </source>
</evidence>
<evidence type="ECO:0007744" key="8">
    <source>
    </source>
</evidence>
<comment type="function">
    <text evidence="1">Adapter protein implicated in the regulation of a large spectrum of both general and specialized signaling pathways. Binds to a large number of partners, usually by recognition of a phosphoserine or phosphothreonine motif. Binding generally results in the modulation of the activity of the binding partner. Promotes inactivation of WDR24 component of the GATOR2 complex by binding to phosphorylated WDR24. Participates in the positive regulation of NMDA glutamate receptor activity by promoting the L-glutamate secretion through interaction with BEST1. Reduces keratinocyte intercellular adhesion, via interacting with PKP1 and sequestering it in the cytoplasm, thereby reducing its incorporation into desmosomes. Plays a role in mitochondrial protein catabolic process (also named MALM) that promotes the degradation of damaged proteins inside mitochondria (By similarity).</text>
</comment>
<comment type="subunit">
    <text evidence="1 2 3">Homodimer (By similarity). Part of a complex that contains DSG3, PKP1, YAP1 and YWHAG; the complex is required for localization of DSG3 and YAP1 to the cell membrane in keratinocytes (By similarity). Interacts with SAMSN1 (By similarity). Interacts with RAF1, SSH1 and CRTC2/TORC2 (By similarity). Interacts with ABL1 (phosphorylated form); the interaction retains it in the cytoplasm (By similarity). Interacts with GAB2 (By similarity). Interacts with MDM4 (phosphorylated); negatively regulates MDM4 activity toward TP53 (By similarity). Interacts with PKA-phosphorylated AANAT and SIRT2 (PubMed:11427721). Interacts with the 'Thr-369' phosphorylated form of DAPK2 (By similarity). Interacts with PI4KB, TBC1D22A and TBC1D22B (By similarity). Interacts with SLITRK1 (By similarity). Interacts with LRRK2; this interaction is dependent on LRRK2 phosphorylation (By similarity). Interacts with MARK2 and MARK3 (By similarity). Interacts with MEFV (By similarity). Interacts with ENDOG, TSC2 and PIK3C3; interaction with ENDOG weakens its interaction with TSC2 and PIK3C3 (By similarity). Interacts with (phosphorylated) WDR24 (By similarity). Interacts with BEST1; this interaction promotes L-glutamate channel activity leading to the positive regulation of NMDA glutamate receptor activity through the L-glutamate secretion (By similarity). Interacts with PKP1 (when phosphorylated); the interaction results in translocation of PKP1 to the cytoplasm and loss of intercellular adhesion in keratinocytes (By similarity). Interacts with SPATA18/MIEAP; a protein that also plays a role in MALM (By similarity).</text>
</comment>
<comment type="interaction">
    <interactant intactId="EBI-359821">
        <id>P61983</id>
    </interactant>
    <interactant intactId="EBI-5323863">
        <id>Q5S007</id>
        <label>LRRK2</label>
    </interactant>
    <organismsDiffer>true</organismsDiffer>
    <experiments>6</experiments>
</comment>
<comment type="subcellular location">
    <subcellularLocation>
        <location evidence="6">Cytoplasm</location>
        <location evidence="6">Cytosol</location>
    </subcellularLocation>
    <subcellularLocation>
        <location evidence="1">Mitochondrion matrix</location>
    </subcellularLocation>
    <text evidence="1">Translocates to the mitochondrial matrix following induction of MALM (mitochondrial protein catabolic process).</text>
</comment>
<comment type="tissue specificity">
    <text evidence="4">Localized in neurons, and axonally transported to the nerve terminals. May be also present, at lower levels, in various other tissues.</text>
</comment>
<comment type="PTM">
    <text evidence="1">Phosphorylated by various PKC isozymes.</text>
</comment>
<comment type="similarity">
    <text evidence="5">Belongs to the 14-3-3 family.</text>
</comment>
<proteinExistence type="evidence at protein level"/>
<keyword id="KW-0007">Acetylation</keyword>
<keyword id="KW-0963">Cytoplasm</keyword>
<keyword id="KW-0903">Direct protein sequencing</keyword>
<keyword id="KW-0496">Mitochondrion</keyword>
<keyword id="KW-0597">Phosphoprotein</keyword>
<keyword id="KW-1185">Reference proteome</keyword>
<reference key="1">
    <citation type="journal article" date="1993" name="Brain Res. Mol. Brain Res.">
        <title>Molecular cloning of rat cDNAs for beta and gamma subtypes of 14-3-3 protein and developmental changes in expression of their mRNAs in the nervous system.</title>
        <authorList>
            <person name="Watanabe M."/>
            <person name="Isobe T."/>
            <person name="Ichimura T."/>
            <person name="Kuwano R."/>
            <person name="Takahashi Y."/>
            <person name="Kondo H."/>
        </authorList>
    </citation>
    <scope>NUCLEOTIDE SEQUENCE [MRNA]</scope>
    <scope>TISSUE SPECIFICITY</scope>
    <source>
        <strain>Brown Norway</strain>
        <strain>Wistar</strain>
        <tissue>Brain</tissue>
    </source>
</reference>
<reference key="2">
    <citation type="journal article" date="2004" name="Genome Res.">
        <title>The status, quality, and expansion of the NIH full-length cDNA project: the Mammalian Gene Collection (MGC).</title>
        <authorList>
            <consortium name="The MGC Project Team"/>
        </authorList>
    </citation>
    <scope>NUCLEOTIDE SEQUENCE [LARGE SCALE MRNA]</scope>
    <source>
        <tissue>Liver</tissue>
    </source>
</reference>
<reference key="3">
    <citation type="submission" date="2009-01" db="UniProtKB">
        <authorList>
            <person name="Lubec G."/>
            <person name="Chen W.-Q."/>
            <person name="Kang S.U."/>
        </authorList>
    </citation>
    <scope>PROTEIN SEQUENCE OF 5-10; 13-56; 62-69; 78-83; 89-120; 133-142 AND 126-247</scope>
    <scope>IDENTIFICATION BY MASS SPECTROMETRY</scope>
    <source>
        <strain>Sprague-Dawley</strain>
        <tissue>Brain</tissue>
        <tissue>Hippocampus</tissue>
    </source>
</reference>
<reference key="4">
    <citation type="journal article" date="2001" name="Proc. Natl. Acad. Sci. U.S.A.">
        <title>Role of a pineal cAMP-operated arylalkylamine N-acetyltransferase/14-3-3-binding switch in melatonin synthesis.</title>
        <authorList>
            <person name="Ganguly S."/>
            <person name="Gastel J.A."/>
            <person name="Weller J.L."/>
            <person name="Schwartz C."/>
            <person name="Jaffe H."/>
            <person name="Namboodiri M.A."/>
            <person name="Coon S.L."/>
            <person name="Hickman A.B."/>
            <person name="Rollag M."/>
            <person name="Obsil T."/>
            <person name="Beauverger P."/>
            <person name="Ferry G."/>
            <person name="Boutin J.A."/>
            <person name="Klein D.C."/>
        </authorList>
    </citation>
    <scope>PROTEIN SEQUENCE OF 144-162</scope>
    <scope>INTERACTION WITH AANAT</scope>
    <scope>IDENTIFICATION BY MASS SPECTROMETRY</scope>
    <scope>SUBCELLULAR LOCATION</scope>
</reference>
<reference key="5">
    <citation type="journal article" date="2012" name="Nat. Commun.">
        <title>Quantitative maps of protein phosphorylation sites across 14 different rat organs and tissues.</title>
        <authorList>
            <person name="Lundby A."/>
            <person name="Secher A."/>
            <person name="Lage K."/>
            <person name="Nordsborg N.B."/>
            <person name="Dmytriyev A."/>
            <person name="Lundby C."/>
            <person name="Olsen J.V."/>
        </authorList>
    </citation>
    <scope>PHOSPHORYLATION [LARGE SCALE ANALYSIS] AT TYR-133 AND SER-215</scope>
    <scope>IDENTIFICATION BY MASS SPECTROMETRY [LARGE SCALE ANALYSIS]</scope>
</reference>
<feature type="chain" id="PRO_0000058609" description="14-3-3 protein gamma">
    <location>
        <begin position="1"/>
        <end position="247"/>
    </location>
</feature>
<feature type="initiator methionine" description="Removed; alternate" evidence="1">
    <location>
        <position position="1"/>
    </location>
</feature>
<feature type="chain" id="PRO_0000367910" description="14-3-3 protein gamma, N-terminally processed">
    <location>
        <begin position="2"/>
        <end position="247"/>
    </location>
</feature>
<feature type="region of interest" description="Interaction with SPATA18/MIEAP" evidence="1">
    <location>
        <begin position="2"/>
        <end position="247"/>
    </location>
</feature>
<feature type="site" description="Interaction with phosphoserine on interacting protein" evidence="1">
    <location>
        <position position="57"/>
    </location>
</feature>
<feature type="site" description="Interaction with phosphoserine on interacting protein" evidence="1">
    <location>
        <position position="132"/>
    </location>
</feature>
<feature type="modified residue" description="N-acetylmethionine" evidence="1">
    <location>
        <position position="1"/>
    </location>
</feature>
<feature type="modified residue" description="N-acetylvaline; in 14-3-3 protein gamma, N-terminally processed" evidence="1">
    <location>
        <position position="2"/>
    </location>
</feature>
<feature type="modified residue" description="Phosphoserine" evidence="1">
    <location>
        <position position="71"/>
    </location>
</feature>
<feature type="modified residue" description="Phosphotyrosine" evidence="8">
    <location>
        <position position="133"/>
    </location>
</feature>
<feature type="modified residue" description="Phosphothreonine" evidence="1">
    <location>
        <position position="145"/>
    </location>
</feature>
<feature type="modified residue" description="Phosphoserine" evidence="8">
    <location>
        <position position="215"/>
    </location>
</feature>
<feature type="modified residue" description="Phosphothreonine" evidence="1">
    <location>
        <position position="234"/>
    </location>
</feature>
<feature type="modified residue" description="Phosphoserine" evidence="1">
    <location>
        <position position="235"/>
    </location>
</feature>
<sequence>MVDREQLVQKARLAEQAERYDDMAAAMKNVTELNEPLSNEERNLLSVAYKNVVGARRSSWRVISSIEQKTSADGNEKKIEMVRAYREKIEKELEAVCQDVLSLLDNYLIKNCSETQYESKVFYLKMKGDYYRYLAEVATGEKRATVVESSEKAYSEAHEISKEHMQPTHPIRLGLALNYSVFYYEIQNAPEQACHLAKTAFDDAIAELDTLNEDSYKDSTLIMQLLRDNLTLWTSDQQDDDGGEGNN</sequence>
<protein>
    <recommendedName>
        <fullName evidence="5">14-3-3 protein gamma</fullName>
    </recommendedName>
    <component>
        <recommendedName>
            <fullName>14-3-3 protein gamma, N-terminally processed</fullName>
        </recommendedName>
    </component>
</protein>